<accession>A9R6X8</accession>
<dbReference type="EC" id="2.8.4.3" evidence="1"/>
<dbReference type="EMBL" id="CP000901">
    <property type="protein sequence ID" value="ABX88543.1"/>
    <property type="status" value="ALT_INIT"/>
    <property type="molecule type" value="Genomic_DNA"/>
</dbReference>
<dbReference type="RefSeq" id="WP_002231077.1">
    <property type="nucleotide sequence ID" value="NZ_CP009935.1"/>
</dbReference>
<dbReference type="SMR" id="A9R6X8"/>
<dbReference type="KEGG" id="ypg:YpAngola_A1829"/>
<dbReference type="PATRIC" id="fig|349746.12.peg.2805"/>
<dbReference type="GO" id="GO:0005829">
    <property type="term" value="C:cytosol"/>
    <property type="evidence" value="ECO:0007669"/>
    <property type="project" value="TreeGrafter"/>
</dbReference>
<dbReference type="GO" id="GO:0051539">
    <property type="term" value="F:4 iron, 4 sulfur cluster binding"/>
    <property type="evidence" value="ECO:0007669"/>
    <property type="project" value="UniProtKB-UniRule"/>
</dbReference>
<dbReference type="GO" id="GO:0046872">
    <property type="term" value="F:metal ion binding"/>
    <property type="evidence" value="ECO:0007669"/>
    <property type="project" value="UniProtKB-KW"/>
</dbReference>
<dbReference type="GO" id="GO:0035597">
    <property type="term" value="F:N6-isopentenyladenosine methylthiotransferase activity"/>
    <property type="evidence" value="ECO:0007669"/>
    <property type="project" value="TreeGrafter"/>
</dbReference>
<dbReference type="CDD" id="cd01335">
    <property type="entry name" value="Radical_SAM"/>
    <property type="match status" value="1"/>
</dbReference>
<dbReference type="FunFam" id="3.40.50.12160:FF:000001">
    <property type="entry name" value="tRNA-2-methylthio-N(6)-dimethylallyladenosine synthase"/>
    <property type="match status" value="1"/>
</dbReference>
<dbReference type="FunFam" id="3.80.30.20:FF:000001">
    <property type="entry name" value="tRNA-2-methylthio-N(6)-dimethylallyladenosine synthase 2"/>
    <property type="match status" value="1"/>
</dbReference>
<dbReference type="Gene3D" id="3.40.50.12160">
    <property type="entry name" value="Methylthiotransferase, N-terminal domain"/>
    <property type="match status" value="1"/>
</dbReference>
<dbReference type="Gene3D" id="3.80.30.20">
    <property type="entry name" value="tm_1862 like domain"/>
    <property type="match status" value="1"/>
</dbReference>
<dbReference type="HAMAP" id="MF_01864">
    <property type="entry name" value="tRNA_metthiotr_MiaB"/>
    <property type="match status" value="1"/>
</dbReference>
<dbReference type="InterPro" id="IPR006638">
    <property type="entry name" value="Elp3/MiaA/NifB-like_rSAM"/>
</dbReference>
<dbReference type="InterPro" id="IPR005839">
    <property type="entry name" value="Methylthiotransferase"/>
</dbReference>
<dbReference type="InterPro" id="IPR020612">
    <property type="entry name" value="Methylthiotransferase_CS"/>
</dbReference>
<dbReference type="InterPro" id="IPR013848">
    <property type="entry name" value="Methylthiotransferase_N"/>
</dbReference>
<dbReference type="InterPro" id="IPR038135">
    <property type="entry name" value="Methylthiotransferase_N_sf"/>
</dbReference>
<dbReference type="InterPro" id="IPR006463">
    <property type="entry name" value="MiaB_methiolase"/>
</dbReference>
<dbReference type="InterPro" id="IPR007197">
    <property type="entry name" value="rSAM"/>
</dbReference>
<dbReference type="InterPro" id="IPR023404">
    <property type="entry name" value="rSAM_horseshoe"/>
</dbReference>
<dbReference type="InterPro" id="IPR002792">
    <property type="entry name" value="TRAM_dom"/>
</dbReference>
<dbReference type="NCBIfam" id="TIGR01574">
    <property type="entry name" value="miaB-methiolase"/>
    <property type="match status" value="1"/>
</dbReference>
<dbReference type="NCBIfam" id="TIGR00089">
    <property type="entry name" value="MiaB/RimO family radical SAM methylthiotransferase"/>
    <property type="match status" value="1"/>
</dbReference>
<dbReference type="PANTHER" id="PTHR43020">
    <property type="entry name" value="CDK5 REGULATORY SUBUNIT-ASSOCIATED PROTEIN 1"/>
    <property type="match status" value="1"/>
</dbReference>
<dbReference type="PANTHER" id="PTHR43020:SF2">
    <property type="entry name" value="MITOCHONDRIAL TRNA METHYLTHIOTRANSFERASE CDK5RAP1"/>
    <property type="match status" value="1"/>
</dbReference>
<dbReference type="Pfam" id="PF04055">
    <property type="entry name" value="Radical_SAM"/>
    <property type="match status" value="1"/>
</dbReference>
<dbReference type="Pfam" id="PF01938">
    <property type="entry name" value="TRAM"/>
    <property type="match status" value="1"/>
</dbReference>
<dbReference type="Pfam" id="PF00919">
    <property type="entry name" value="UPF0004"/>
    <property type="match status" value="1"/>
</dbReference>
<dbReference type="SFLD" id="SFLDF00273">
    <property type="entry name" value="(dimethylallyl)adenosine_tRNA"/>
    <property type="match status" value="1"/>
</dbReference>
<dbReference type="SFLD" id="SFLDG01082">
    <property type="entry name" value="B12-binding_domain_containing"/>
    <property type="match status" value="1"/>
</dbReference>
<dbReference type="SFLD" id="SFLDG01061">
    <property type="entry name" value="methylthiotransferase"/>
    <property type="match status" value="1"/>
</dbReference>
<dbReference type="SMART" id="SM00729">
    <property type="entry name" value="Elp3"/>
    <property type="match status" value="1"/>
</dbReference>
<dbReference type="SUPFAM" id="SSF102114">
    <property type="entry name" value="Radical SAM enzymes"/>
    <property type="match status" value="1"/>
</dbReference>
<dbReference type="PROSITE" id="PS51449">
    <property type="entry name" value="MTTASE_N"/>
    <property type="match status" value="1"/>
</dbReference>
<dbReference type="PROSITE" id="PS01278">
    <property type="entry name" value="MTTASE_RADICAL"/>
    <property type="match status" value="1"/>
</dbReference>
<dbReference type="PROSITE" id="PS51918">
    <property type="entry name" value="RADICAL_SAM"/>
    <property type="match status" value="1"/>
</dbReference>
<dbReference type="PROSITE" id="PS50926">
    <property type="entry name" value="TRAM"/>
    <property type="match status" value="1"/>
</dbReference>
<proteinExistence type="inferred from homology"/>
<sequence>MTKKLHIKTWGCQMNEYDSSKMADLLASTHGYQLTTIPEEADLLLLNTCSIREKAQEKVFSLLGQWKLLKEKNPQLIIGVGGCVASQEGEQLRQRAPCVDVIFGPQTLHRLPEMINHVQGTNSPVVDISFPEIEKFDRLPEPRAEGPTAFVSIMEGCNKYCTFCVVPYTRGEEVSRPSDDILFEIAQLAAQGVREVNLLGQNVNAYRGATYDGDICSFAELLRLVAAIDGIDRVRFTTSHPIEFTDDIIDVYRDTPELVSFLHLPVQSGSDRILTMMKRAHTALEYKAIIRKLRQARPDIQISSDFIVGFPGETQQDFEQTMKLVADIHFDTSYSFIYSPRPGTPAADLPDNVSEEEKKQRLHILQQRISQQAMEISRKMVGTVQRVLVEGTSRKNVMELAGRTENNRVVNFEGSPDMIGKFVDVEIVNVYASSLRGILLRTEDQMDLRTHESPQSVIARTRKENEIGVGIYQP</sequence>
<feature type="chain" id="PRO_0000374657" description="tRNA-2-methylthio-N(6)-dimethylallyladenosine synthase">
    <location>
        <begin position="1"/>
        <end position="474"/>
    </location>
</feature>
<feature type="domain" description="MTTase N-terminal" evidence="1">
    <location>
        <begin position="3"/>
        <end position="120"/>
    </location>
</feature>
<feature type="domain" description="Radical SAM core" evidence="2">
    <location>
        <begin position="143"/>
        <end position="375"/>
    </location>
</feature>
<feature type="domain" description="TRAM" evidence="1">
    <location>
        <begin position="378"/>
        <end position="441"/>
    </location>
</feature>
<feature type="binding site" evidence="1">
    <location>
        <position position="12"/>
    </location>
    <ligand>
        <name>[4Fe-4S] cluster</name>
        <dbReference type="ChEBI" id="CHEBI:49883"/>
        <label>1</label>
    </ligand>
</feature>
<feature type="binding site" evidence="1">
    <location>
        <position position="49"/>
    </location>
    <ligand>
        <name>[4Fe-4S] cluster</name>
        <dbReference type="ChEBI" id="CHEBI:49883"/>
        <label>1</label>
    </ligand>
</feature>
<feature type="binding site" evidence="1">
    <location>
        <position position="83"/>
    </location>
    <ligand>
        <name>[4Fe-4S] cluster</name>
        <dbReference type="ChEBI" id="CHEBI:49883"/>
        <label>1</label>
    </ligand>
</feature>
<feature type="binding site" evidence="1">
    <location>
        <position position="157"/>
    </location>
    <ligand>
        <name>[4Fe-4S] cluster</name>
        <dbReference type="ChEBI" id="CHEBI:49883"/>
        <label>2</label>
        <note>4Fe-4S-S-AdoMet</note>
    </ligand>
</feature>
<feature type="binding site" evidence="1">
    <location>
        <position position="161"/>
    </location>
    <ligand>
        <name>[4Fe-4S] cluster</name>
        <dbReference type="ChEBI" id="CHEBI:49883"/>
        <label>2</label>
        <note>4Fe-4S-S-AdoMet</note>
    </ligand>
</feature>
<feature type="binding site" evidence="1">
    <location>
        <position position="164"/>
    </location>
    <ligand>
        <name>[4Fe-4S] cluster</name>
        <dbReference type="ChEBI" id="CHEBI:49883"/>
        <label>2</label>
        <note>4Fe-4S-S-AdoMet</note>
    </ligand>
</feature>
<name>MIAB_YERPG</name>
<reference key="1">
    <citation type="journal article" date="2010" name="J. Bacteriol.">
        <title>Genome sequence of the deep-rooted Yersinia pestis strain Angola reveals new insights into the evolution and pangenome of the plague bacterium.</title>
        <authorList>
            <person name="Eppinger M."/>
            <person name="Worsham P.L."/>
            <person name="Nikolich M.P."/>
            <person name="Riley D.R."/>
            <person name="Sebastian Y."/>
            <person name="Mou S."/>
            <person name="Achtman M."/>
            <person name="Lindler L.E."/>
            <person name="Ravel J."/>
        </authorList>
    </citation>
    <scope>NUCLEOTIDE SEQUENCE [LARGE SCALE GENOMIC DNA]</scope>
    <source>
        <strain>Angola</strain>
    </source>
</reference>
<gene>
    <name evidence="1" type="primary">miaB</name>
    <name type="ordered locus">YpAngola_A1829</name>
</gene>
<protein>
    <recommendedName>
        <fullName evidence="1">tRNA-2-methylthio-N(6)-dimethylallyladenosine synthase</fullName>
        <ecNumber evidence="1">2.8.4.3</ecNumber>
    </recommendedName>
    <alternativeName>
        <fullName evidence="1">(Dimethylallyl)adenosine tRNA methylthiotransferase MiaB</fullName>
    </alternativeName>
    <alternativeName>
        <fullName evidence="1">tRNA-i(6)A37 methylthiotransferase</fullName>
    </alternativeName>
</protein>
<comment type="function">
    <text evidence="1">Catalyzes the methylthiolation of N6-(dimethylallyl)adenosine (i(6)A), leading to the formation of 2-methylthio-N6-(dimethylallyl)adenosine (ms(2)i(6)A) at position 37 in tRNAs that read codons beginning with uridine.</text>
</comment>
<comment type="catalytic activity">
    <reaction evidence="1">
        <text>N(6)-dimethylallyladenosine(37) in tRNA + (sulfur carrier)-SH + AH2 + 2 S-adenosyl-L-methionine = 2-methylsulfanyl-N(6)-dimethylallyladenosine(37) in tRNA + (sulfur carrier)-H + 5'-deoxyadenosine + L-methionine + A + S-adenosyl-L-homocysteine + 2 H(+)</text>
        <dbReference type="Rhea" id="RHEA:37067"/>
        <dbReference type="Rhea" id="RHEA-COMP:10375"/>
        <dbReference type="Rhea" id="RHEA-COMP:10376"/>
        <dbReference type="Rhea" id="RHEA-COMP:14737"/>
        <dbReference type="Rhea" id="RHEA-COMP:14739"/>
        <dbReference type="ChEBI" id="CHEBI:13193"/>
        <dbReference type="ChEBI" id="CHEBI:15378"/>
        <dbReference type="ChEBI" id="CHEBI:17319"/>
        <dbReference type="ChEBI" id="CHEBI:17499"/>
        <dbReference type="ChEBI" id="CHEBI:29917"/>
        <dbReference type="ChEBI" id="CHEBI:57844"/>
        <dbReference type="ChEBI" id="CHEBI:57856"/>
        <dbReference type="ChEBI" id="CHEBI:59789"/>
        <dbReference type="ChEBI" id="CHEBI:64428"/>
        <dbReference type="ChEBI" id="CHEBI:74415"/>
        <dbReference type="ChEBI" id="CHEBI:74417"/>
        <dbReference type="EC" id="2.8.4.3"/>
    </reaction>
</comment>
<comment type="cofactor">
    <cofactor evidence="1">
        <name>[4Fe-4S] cluster</name>
        <dbReference type="ChEBI" id="CHEBI:49883"/>
    </cofactor>
    <text evidence="1">Binds 2 [4Fe-4S] clusters. One cluster is coordinated with 3 cysteines and an exchangeable S-adenosyl-L-methionine.</text>
</comment>
<comment type="subunit">
    <text evidence="1">Monomer.</text>
</comment>
<comment type="subcellular location">
    <subcellularLocation>
        <location evidence="1">Cytoplasm</location>
    </subcellularLocation>
</comment>
<comment type="similarity">
    <text evidence="1">Belongs to the methylthiotransferase family. MiaB subfamily.</text>
</comment>
<comment type="sequence caution" evidence="3">
    <conflict type="erroneous initiation">
        <sequence resource="EMBL-CDS" id="ABX88543"/>
    </conflict>
</comment>
<keyword id="KW-0004">4Fe-4S</keyword>
<keyword id="KW-0963">Cytoplasm</keyword>
<keyword id="KW-0408">Iron</keyword>
<keyword id="KW-0411">Iron-sulfur</keyword>
<keyword id="KW-0479">Metal-binding</keyword>
<keyword id="KW-0949">S-adenosyl-L-methionine</keyword>
<keyword id="KW-0808">Transferase</keyword>
<keyword id="KW-0819">tRNA processing</keyword>
<organism>
    <name type="scientific">Yersinia pestis bv. Antiqua (strain Angola)</name>
    <dbReference type="NCBI Taxonomy" id="349746"/>
    <lineage>
        <taxon>Bacteria</taxon>
        <taxon>Pseudomonadati</taxon>
        <taxon>Pseudomonadota</taxon>
        <taxon>Gammaproteobacteria</taxon>
        <taxon>Enterobacterales</taxon>
        <taxon>Yersiniaceae</taxon>
        <taxon>Yersinia</taxon>
    </lineage>
</organism>
<evidence type="ECO:0000255" key="1">
    <source>
        <dbReference type="HAMAP-Rule" id="MF_01864"/>
    </source>
</evidence>
<evidence type="ECO:0000255" key="2">
    <source>
        <dbReference type="PROSITE-ProRule" id="PRU01266"/>
    </source>
</evidence>
<evidence type="ECO:0000305" key="3"/>